<keyword id="KW-0997">Cell inner membrane</keyword>
<keyword id="KW-1003">Cell membrane</keyword>
<keyword id="KW-0963">Cytoplasm</keyword>
<keyword id="KW-0342">GTP-binding</keyword>
<keyword id="KW-0472">Membrane</keyword>
<keyword id="KW-0547">Nucleotide-binding</keyword>
<keyword id="KW-0690">Ribosome biogenesis</keyword>
<keyword id="KW-0694">RNA-binding</keyword>
<keyword id="KW-0699">rRNA-binding</keyword>
<organism>
    <name type="scientific">Nitratidesulfovibrio vulgaris (strain DSM 19637 / Miyazaki F)</name>
    <name type="common">Desulfovibrio vulgaris</name>
    <dbReference type="NCBI Taxonomy" id="883"/>
    <lineage>
        <taxon>Bacteria</taxon>
        <taxon>Pseudomonadati</taxon>
        <taxon>Thermodesulfobacteriota</taxon>
        <taxon>Desulfovibrionia</taxon>
        <taxon>Desulfovibrionales</taxon>
        <taxon>Desulfovibrionaceae</taxon>
        <taxon>Nitratidesulfovibrio</taxon>
    </lineage>
</organism>
<proteinExistence type="inferred from homology"/>
<dbReference type="EMBL" id="CP001197">
    <property type="protein sequence ID" value="ACL09150.1"/>
    <property type="molecule type" value="Genomic_DNA"/>
</dbReference>
<dbReference type="SMR" id="B8DQN1"/>
<dbReference type="STRING" id="883.DvMF_2207"/>
<dbReference type="KEGG" id="dvm:DvMF_2207"/>
<dbReference type="eggNOG" id="COG1159">
    <property type="taxonomic scope" value="Bacteria"/>
</dbReference>
<dbReference type="HOGENOM" id="CLU_038009_1_0_7"/>
<dbReference type="OrthoDB" id="9805918at2"/>
<dbReference type="GO" id="GO:0005829">
    <property type="term" value="C:cytosol"/>
    <property type="evidence" value="ECO:0007669"/>
    <property type="project" value="TreeGrafter"/>
</dbReference>
<dbReference type="GO" id="GO:0005886">
    <property type="term" value="C:plasma membrane"/>
    <property type="evidence" value="ECO:0007669"/>
    <property type="project" value="UniProtKB-SubCell"/>
</dbReference>
<dbReference type="GO" id="GO:0005525">
    <property type="term" value="F:GTP binding"/>
    <property type="evidence" value="ECO:0007669"/>
    <property type="project" value="UniProtKB-UniRule"/>
</dbReference>
<dbReference type="GO" id="GO:0003924">
    <property type="term" value="F:GTPase activity"/>
    <property type="evidence" value="ECO:0007669"/>
    <property type="project" value="UniProtKB-UniRule"/>
</dbReference>
<dbReference type="GO" id="GO:0043024">
    <property type="term" value="F:ribosomal small subunit binding"/>
    <property type="evidence" value="ECO:0007669"/>
    <property type="project" value="TreeGrafter"/>
</dbReference>
<dbReference type="GO" id="GO:0070181">
    <property type="term" value="F:small ribosomal subunit rRNA binding"/>
    <property type="evidence" value="ECO:0007669"/>
    <property type="project" value="UniProtKB-UniRule"/>
</dbReference>
<dbReference type="GO" id="GO:0000028">
    <property type="term" value="P:ribosomal small subunit assembly"/>
    <property type="evidence" value="ECO:0007669"/>
    <property type="project" value="TreeGrafter"/>
</dbReference>
<dbReference type="CDD" id="cd04163">
    <property type="entry name" value="Era"/>
    <property type="match status" value="1"/>
</dbReference>
<dbReference type="CDD" id="cd22534">
    <property type="entry name" value="KH-II_Era"/>
    <property type="match status" value="1"/>
</dbReference>
<dbReference type="FunFam" id="3.30.300.20:FF:000003">
    <property type="entry name" value="GTPase Era"/>
    <property type="match status" value="1"/>
</dbReference>
<dbReference type="Gene3D" id="3.30.300.20">
    <property type="match status" value="1"/>
</dbReference>
<dbReference type="Gene3D" id="3.40.50.300">
    <property type="entry name" value="P-loop containing nucleotide triphosphate hydrolases"/>
    <property type="match status" value="1"/>
</dbReference>
<dbReference type="HAMAP" id="MF_00367">
    <property type="entry name" value="GTPase_Era"/>
    <property type="match status" value="1"/>
</dbReference>
<dbReference type="InterPro" id="IPR030388">
    <property type="entry name" value="G_ERA_dom"/>
</dbReference>
<dbReference type="InterPro" id="IPR006073">
    <property type="entry name" value="GTP-bd"/>
</dbReference>
<dbReference type="InterPro" id="IPR005662">
    <property type="entry name" value="GTPase_Era-like"/>
</dbReference>
<dbReference type="InterPro" id="IPR015946">
    <property type="entry name" value="KH_dom-like_a/b"/>
</dbReference>
<dbReference type="InterPro" id="IPR004044">
    <property type="entry name" value="KH_dom_type_2"/>
</dbReference>
<dbReference type="InterPro" id="IPR009019">
    <property type="entry name" value="KH_sf_prok-type"/>
</dbReference>
<dbReference type="InterPro" id="IPR027417">
    <property type="entry name" value="P-loop_NTPase"/>
</dbReference>
<dbReference type="InterPro" id="IPR005225">
    <property type="entry name" value="Small_GTP-bd"/>
</dbReference>
<dbReference type="NCBIfam" id="TIGR00436">
    <property type="entry name" value="era"/>
    <property type="match status" value="1"/>
</dbReference>
<dbReference type="NCBIfam" id="NF000908">
    <property type="entry name" value="PRK00089.1"/>
    <property type="match status" value="1"/>
</dbReference>
<dbReference type="NCBIfam" id="TIGR00231">
    <property type="entry name" value="small_GTP"/>
    <property type="match status" value="1"/>
</dbReference>
<dbReference type="PANTHER" id="PTHR42698">
    <property type="entry name" value="GTPASE ERA"/>
    <property type="match status" value="1"/>
</dbReference>
<dbReference type="PANTHER" id="PTHR42698:SF1">
    <property type="entry name" value="GTPASE ERA, MITOCHONDRIAL"/>
    <property type="match status" value="1"/>
</dbReference>
<dbReference type="Pfam" id="PF07650">
    <property type="entry name" value="KH_2"/>
    <property type="match status" value="1"/>
</dbReference>
<dbReference type="Pfam" id="PF01926">
    <property type="entry name" value="MMR_HSR1"/>
    <property type="match status" value="1"/>
</dbReference>
<dbReference type="SUPFAM" id="SSF52540">
    <property type="entry name" value="P-loop containing nucleoside triphosphate hydrolases"/>
    <property type="match status" value="1"/>
</dbReference>
<dbReference type="SUPFAM" id="SSF54814">
    <property type="entry name" value="Prokaryotic type KH domain (KH-domain type II)"/>
    <property type="match status" value="1"/>
</dbReference>
<dbReference type="PROSITE" id="PS51713">
    <property type="entry name" value="G_ERA"/>
    <property type="match status" value="1"/>
</dbReference>
<dbReference type="PROSITE" id="PS50823">
    <property type="entry name" value="KH_TYPE_2"/>
    <property type="match status" value="1"/>
</dbReference>
<sequence>MTKTEHRCGWVALLGPPNAGKSTLLNSALGHKVAIVTPRAQTTRNQIVGILSEPDAQVIFMDTPGIHQQRGRMNKILLQTAWQSMHSADVILVMLDADLYIKKPDFLENDVKPLMDAVAAEERPVIVAVNKVDLFRDKSKMLPLFIELQKLWPKAEVFPVSALKRDGLPELVKLVKSKLPVAPALYPEDQLSTLPVRFMAAEIVREKLFLALRQELPYSVAVEIEKWDEEEGRDLVTIHAVIYVGRPSHKSMVIGKAGATIKDIGTKARVDIQDLLEKKVHLELWVKVREGWTEDVGFLRSLGLADE</sequence>
<comment type="function">
    <text evidence="1">An essential GTPase that binds both GDP and GTP, with rapid nucleotide exchange. Plays a role in 16S rRNA processing and 30S ribosomal subunit biogenesis and possibly also in cell cycle regulation and energy metabolism.</text>
</comment>
<comment type="subunit">
    <text evidence="1">Monomer.</text>
</comment>
<comment type="subcellular location">
    <subcellularLocation>
        <location>Cytoplasm</location>
    </subcellularLocation>
    <subcellularLocation>
        <location evidence="1">Cell inner membrane</location>
        <topology evidence="1">Peripheral membrane protein</topology>
    </subcellularLocation>
</comment>
<comment type="similarity">
    <text evidence="1 2">Belongs to the TRAFAC class TrmE-Era-EngA-EngB-Septin-like GTPase superfamily. Era GTPase family.</text>
</comment>
<protein>
    <recommendedName>
        <fullName evidence="1">GTPase Era</fullName>
    </recommendedName>
</protein>
<feature type="chain" id="PRO_1000121317" description="GTPase Era">
    <location>
        <begin position="1"/>
        <end position="307"/>
    </location>
</feature>
<feature type="domain" description="Era-type G" evidence="2">
    <location>
        <begin position="7"/>
        <end position="181"/>
    </location>
</feature>
<feature type="domain" description="KH type-2" evidence="1">
    <location>
        <begin position="212"/>
        <end position="290"/>
    </location>
</feature>
<feature type="region of interest" description="G1" evidence="2">
    <location>
        <begin position="15"/>
        <end position="22"/>
    </location>
</feature>
<feature type="region of interest" description="G2" evidence="2">
    <location>
        <begin position="41"/>
        <end position="45"/>
    </location>
</feature>
<feature type="region of interest" description="G3" evidence="2">
    <location>
        <begin position="62"/>
        <end position="65"/>
    </location>
</feature>
<feature type="region of interest" description="G4" evidence="2">
    <location>
        <begin position="130"/>
        <end position="133"/>
    </location>
</feature>
<feature type="region of interest" description="G5" evidence="2">
    <location>
        <begin position="160"/>
        <end position="162"/>
    </location>
</feature>
<feature type="binding site" evidence="1">
    <location>
        <begin position="15"/>
        <end position="22"/>
    </location>
    <ligand>
        <name>GTP</name>
        <dbReference type="ChEBI" id="CHEBI:37565"/>
    </ligand>
</feature>
<feature type="binding site" evidence="1">
    <location>
        <begin position="62"/>
        <end position="66"/>
    </location>
    <ligand>
        <name>GTP</name>
        <dbReference type="ChEBI" id="CHEBI:37565"/>
    </ligand>
</feature>
<feature type="binding site" evidence="1">
    <location>
        <begin position="130"/>
        <end position="133"/>
    </location>
    <ligand>
        <name>GTP</name>
        <dbReference type="ChEBI" id="CHEBI:37565"/>
    </ligand>
</feature>
<name>ERA_NITV9</name>
<evidence type="ECO:0000255" key="1">
    <source>
        <dbReference type="HAMAP-Rule" id="MF_00367"/>
    </source>
</evidence>
<evidence type="ECO:0000255" key="2">
    <source>
        <dbReference type="PROSITE-ProRule" id="PRU01050"/>
    </source>
</evidence>
<gene>
    <name evidence="1" type="primary">era</name>
    <name type="ordered locus">DvMF_2207</name>
</gene>
<reference key="1">
    <citation type="submission" date="2008-10" db="EMBL/GenBank/DDBJ databases">
        <title>Complete sequence of Desulfovibrio vulgaris str. 'Miyazaki F'.</title>
        <authorList>
            <person name="Lucas S."/>
            <person name="Copeland A."/>
            <person name="Lapidus A."/>
            <person name="Glavina del Rio T."/>
            <person name="Dalin E."/>
            <person name="Tice H."/>
            <person name="Bruce D."/>
            <person name="Goodwin L."/>
            <person name="Pitluck S."/>
            <person name="Sims D."/>
            <person name="Brettin T."/>
            <person name="Detter J.C."/>
            <person name="Han C."/>
            <person name="Larimer F."/>
            <person name="Land M."/>
            <person name="Hauser L."/>
            <person name="Kyrpides N."/>
            <person name="Mikhailova N."/>
            <person name="Hazen T.C."/>
            <person name="Richardson P."/>
        </authorList>
    </citation>
    <scope>NUCLEOTIDE SEQUENCE [LARGE SCALE GENOMIC DNA]</scope>
    <source>
        <strain>DSM 19637 / Miyazaki F</strain>
    </source>
</reference>
<accession>B8DQN1</accession>